<evidence type="ECO:0000255" key="1">
    <source>
        <dbReference type="HAMAP-Rule" id="MF_01690"/>
    </source>
</evidence>
<feature type="chain" id="PRO_0000375650" description="Succinyl-diaminopimelate desuccinylase">
    <location>
        <begin position="1"/>
        <end position="376"/>
    </location>
</feature>
<feature type="active site" evidence="1">
    <location>
        <position position="69"/>
    </location>
</feature>
<feature type="active site" description="Proton acceptor" evidence="1">
    <location>
        <position position="134"/>
    </location>
</feature>
<feature type="binding site" evidence="1">
    <location>
        <position position="67"/>
    </location>
    <ligand>
        <name>Zn(2+)</name>
        <dbReference type="ChEBI" id="CHEBI:29105"/>
        <label>1</label>
    </ligand>
</feature>
<feature type="binding site" evidence="1">
    <location>
        <position position="100"/>
    </location>
    <ligand>
        <name>Zn(2+)</name>
        <dbReference type="ChEBI" id="CHEBI:29105"/>
        <label>1</label>
    </ligand>
</feature>
<feature type="binding site" evidence="1">
    <location>
        <position position="100"/>
    </location>
    <ligand>
        <name>Zn(2+)</name>
        <dbReference type="ChEBI" id="CHEBI:29105"/>
        <label>2</label>
    </ligand>
</feature>
<feature type="binding site" evidence="1">
    <location>
        <position position="135"/>
    </location>
    <ligand>
        <name>Zn(2+)</name>
        <dbReference type="ChEBI" id="CHEBI:29105"/>
        <label>2</label>
    </ligand>
</feature>
<feature type="binding site" evidence="1">
    <location>
        <position position="163"/>
    </location>
    <ligand>
        <name>Zn(2+)</name>
        <dbReference type="ChEBI" id="CHEBI:29105"/>
        <label>1</label>
    </ligand>
</feature>
<feature type="binding site" evidence="1">
    <location>
        <position position="349"/>
    </location>
    <ligand>
        <name>Zn(2+)</name>
        <dbReference type="ChEBI" id="CHEBI:29105"/>
        <label>2</label>
    </ligand>
</feature>
<proteinExistence type="inferred from homology"/>
<name>DAPE_PROMH</name>
<protein>
    <recommendedName>
        <fullName evidence="1">Succinyl-diaminopimelate desuccinylase</fullName>
        <shortName evidence="1">SDAP desuccinylase</shortName>
        <ecNumber evidence="1">3.5.1.18</ecNumber>
    </recommendedName>
    <alternativeName>
        <fullName evidence="1">N-succinyl-LL-2,6-diaminoheptanedioate amidohydrolase</fullName>
    </alternativeName>
</protein>
<comment type="function">
    <text evidence="1">Catalyzes the hydrolysis of N-succinyl-L,L-diaminopimelic acid (SDAP), forming succinate and LL-2,6-diaminopimelate (DAP), an intermediate involved in the bacterial biosynthesis of lysine and meso-diaminopimelic acid, an essential component of bacterial cell walls.</text>
</comment>
<comment type="catalytic activity">
    <reaction evidence="1">
        <text>N-succinyl-(2S,6S)-2,6-diaminopimelate + H2O = (2S,6S)-2,6-diaminopimelate + succinate</text>
        <dbReference type="Rhea" id="RHEA:22608"/>
        <dbReference type="ChEBI" id="CHEBI:15377"/>
        <dbReference type="ChEBI" id="CHEBI:30031"/>
        <dbReference type="ChEBI" id="CHEBI:57609"/>
        <dbReference type="ChEBI" id="CHEBI:58087"/>
        <dbReference type="EC" id="3.5.1.18"/>
    </reaction>
</comment>
<comment type="cofactor">
    <cofactor evidence="1">
        <name>Zn(2+)</name>
        <dbReference type="ChEBI" id="CHEBI:29105"/>
    </cofactor>
    <cofactor evidence="1">
        <name>Co(2+)</name>
        <dbReference type="ChEBI" id="CHEBI:48828"/>
    </cofactor>
    <text evidence="1">Binds 2 Zn(2+) or Co(2+) ions per subunit.</text>
</comment>
<comment type="pathway">
    <text evidence="1">Amino-acid biosynthesis; L-lysine biosynthesis via DAP pathway; LL-2,6-diaminopimelate from (S)-tetrahydrodipicolinate (succinylase route): step 3/3.</text>
</comment>
<comment type="subunit">
    <text evidence="1">Homodimer.</text>
</comment>
<comment type="similarity">
    <text evidence="1">Belongs to the peptidase M20A family. DapE subfamily.</text>
</comment>
<gene>
    <name evidence="1" type="primary">dapE</name>
    <name type="ordered locus">PMI1556</name>
</gene>
<keyword id="KW-0028">Amino-acid biosynthesis</keyword>
<keyword id="KW-0170">Cobalt</keyword>
<keyword id="KW-0220">Diaminopimelate biosynthesis</keyword>
<keyword id="KW-0378">Hydrolase</keyword>
<keyword id="KW-0457">Lysine biosynthesis</keyword>
<keyword id="KW-0479">Metal-binding</keyword>
<keyword id="KW-1185">Reference proteome</keyword>
<keyword id="KW-0862">Zinc</keyword>
<organism>
    <name type="scientific">Proteus mirabilis (strain HI4320)</name>
    <dbReference type="NCBI Taxonomy" id="529507"/>
    <lineage>
        <taxon>Bacteria</taxon>
        <taxon>Pseudomonadati</taxon>
        <taxon>Pseudomonadota</taxon>
        <taxon>Gammaproteobacteria</taxon>
        <taxon>Enterobacterales</taxon>
        <taxon>Morganellaceae</taxon>
        <taxon>Proteus</taxon>
    </lineage>
</organism>
<reference key="1">
    <citation type="journal article" date="2008" name="J. Bacteriol.">
        <title>Complete genome sequence of uropathogenic Proteus mirabilis, a master of both adherence and motility.</title>
        <authorList>
            <person name="Pearson M.M."/>
            <person name="Sebaihia M."/>
            <person name="Churcher C."/>
            <person name="Quail M.A."/>
            <person name="Seshasayee A.S."/>
            <person name="Luscombe N.M."/>
            <person name="Abdellah Z."/>
            <person name="Arrosmith C."/>
            <person name="Atkin B."/>
            <person name="Chillingworth T."/>
            <person name="Hauser H."/>
            <person name="Jagels K."/>
            <person name="Moule S."/>
            <person name="Mungall K."/>
            <person name="Norbertczak H."/>
            <person name="Rabbinowitsch E."/>
            <person name="Walker D."/>
            <person name="Whithead S."/>
            <person name="Thomson N.R."/>
            <person name="Rather P.N."/>
            <person name="Parkhill J."/>
            <person name="Mobley H.L.T."/>
        </authorList>
    </citation>
    <scope>NUCLEOTIDE SEQUENCE [LARGE SCALE GENOMIC DNA]</scope>
    <source>
        <strain>HI4320</strain>
    </source>
</reference>
<sequence>MSCPVIELAQQLISRPSVSPDDQGCQQLIIERLTPLGFTIEKMPFGQTENLWACRGGEGETLAFAGHTDVVPPGANALWDNPPFEPSIRDGMLYGRGAADMKGSLAAMVVAAERFVHAYPQHRGRLAFLITSDEEADAHDGTVKVVESLISRGERLDYCLVGEPSSQHQLGDMIKNGRRGSITANVTIYGTQGHVAYPHLAQNPIHMASPFIHELVNTVWDNGNEYFPATTMQIANIHSGTGSNNVIPGELFIQFNFRFSTAITDEEIRQRTEALLQKYQLRYHISWSLSGQPFITGEGKLLDAVRYSVKHYTNIEPTLSTSGGTSDGRFIAQMGAQVVELGPINATIHKVNECVSAADLQQLSRIYQRIMEQIIL</sequence>
<accession>B4EY70</accession>
<dbReference type="EC" id="3.5.1.18" evidence="1"/>
<dbReference type="EMBL" id="AM942759">
    <property type="protein sequence ID" value="CAR43264.1"/>
    <property type="molecule type" value="Genomic_DNA"/>
</dbReference>
<dbReference type="RefSeq" id="WP_012368032.1">
    <property type="nucleotide sequence ID" value="NC_010554.1"/>
</dbReference>
<dbReference type="SMR" id="B4EY70"/>
<dbReference type="MEROPS" id="M20.010"/>
<dbReference type="EnsemblBacteria" id="CAR43264">
    <property type="protein sequence ID" value="CAR43264"/>
    <property type="gene ID" value="PMI1556"/>
</dbReference>
<dbReference type="GeneID" id="6799960"/>
<dbReference type="KEGG" id="pmr:PMI1556"/>
<dbReference type="PATRIC" id="fig|529507.6.peg.1504"/>
<dbReference type="eggNOG" id="COG0624">
    <property type="taxonomic scope" value="Bacteria"/>
</dbReference>
<dbReference type="HOGENOM" id="CLU_021802_4_0_6"/>
<dbReference type="UniPathway" id="UPA00034">
    <property type="reaction ID" value="UER00021"/>
</dbReference>
<dbReference type="Proteomes" id="UP000008319">
    <property type="component" value="Chromosome"/>
</dbReference>
<dbReference type="GO" id="GO:0008777">
    <property type="term" value="F:acetylornithine deacetylase activity"/>
    <property type="evidence" value="ECO:0007669"/>
    <property type="project" value="TreeGrafter"/>
</dbReference>
<dbReference type="GO" id="GO:0050897">
    <property type="term" value="F:cobalt ion binding"/>
    <property type="evidence" value="ECO:0007669"/>
    <property type="project" value="UniProtKB-UniRule"/>
</dbReference>
<dbReference type="GO" id="GO:0009014">
    <property type="term" value="F:succinyl-diaminopimelate desuccinylase activity"/>
    <property type="evidence" value="ECO:0007669"/>
    <property type="project" value="UniProtKB-UniRule"/>
</dbReference>
<dbReference type="GO" id="GO:0008270">
    <property type="term" value="F:zinc ion binding"/>
    <property type="evidence" value="ECO:0007669"/>
    <property type="project" value="UniProtKB-UniRule"/>
</dbReference>
<dbReference type="GO" id="GO:0019877">
    <property type="term" value="P:diaminopimelate biosynthetic process"/>
    <property type="evidence" value="ECO:0007669"/>
    <property type="project" value="UniProtKB-UniRule"/>
</dbReference>
<dbReference type="GO" id="GO:0006526">
    <property type="term" value="P:L-arginine biosynthetic process"/>
    <property type="evidence" value="ECO:0007669"/>
    <property type="project" value="TreeGrafter"/>
</dbReference>
<dbReference type="GO" id="GO:0009089">
    <property type="term" value="P:lysine biosynthetic process via diaminopimelate"/>
    <property type="evidence" value="ECO:0007669"/>
    <property type="project" value="UniProtKB-UniRule"/>
</dbReference>
<dbReference type="CDD" id="cd03891">
    <property type="entry name" value="M20_DapE_proteobac"/>
    <property type="match status" value="1"/>
</dbReference>
<dbReference type="FunFam" id="3.30.70.360:FF:000011">
    <property type="entry name" value="Succinyl-diaminopimelate desuccinylase"/>
    <property type="match status" value="1"/>
</dbReference>
<dbReference type="FunFam" id="3.40.630.10:FF:000005">
    <property type="entry name" value="Succinyl-diaminopimelate desuccinylase"/>
    <property type="match status" value="1"/>
</dbReference>
<dbReference type="FunFam" id="3.40.630.10:FF:000010">
    <property type="entry name" value="Succinyl-diaminopimelate desuccinylase"/>
    <property type="match status" value="1"/>
</dbReference>
<dbReference type="Gene3D" id="3.40.630.10">
    <property type="entry name" value="Zn peptidases"/>
    <property type="match status" value="2"/>
</dbReference>
<dbReference type="HAMAP" id="MF_01690">
    <property type="entry name" value="DapE"/>
    <property type="match status" value="1"/>
</dbReference>
<dbReference type="InterPro" id="IPR001261">
    <property type="entry name" value="ArgE/DapE_CS"/>
</dbReference>
<dbReference type="InterPro" id="IPR036264">
    <property type="entry name" value="Bact_exopeptidase_dim_dom"/>
</dbReference>
<dbReference type="InterPro" id="IPR005941">
    <property type="entry name" value="DapE_proteobac"/>
</dbReference>
<dbReference type="InterPro" id="IPR002933">
    <property type="entry name" value="Peptidase_M20"/>
</dbReference>
<dbReference type="InterPro" id="IPR011650">
    <property type="entry name" value="Peptidase_M20_dimer"/>
</dbReference>
<dbReference type="InterPro" id="IPR050072">
    <property type="entry name" value="Peptidase_M20A"/>
</dbReference>
<dbReference type="NCBIfam" id="TIGR01246">
    <property type="entry name" value="dapE_proteo"/>
    <property type="match status" value="1"/>
</dbReference>
<dbReference type="NCBIfam" id="NF009557">
    <property type="entry name" value="PRK13009.1"/>
    <property type="match status" value="1"/>
</dbReference>
<dbReference type="PANTHER" id="PTHR43808">
    <property type="entry name" value="ACETYLORNITHINE DEACETYLASE"/>
    <property type="match status" value="1"/>
</dbReference>
<dbReference type="PANTHER" id="PTHR43808:SF31">
    <property type="entry name" value="N-ACETYL-L-CITRULLINE DEACETYLASE"/>
    <property type="match status" value="1"/>
</dbReference>
<dbReference type="Pfam" id="PF07687">
    <property type="entry name" value="M20_dimer"/>
    <property type="match status" value="1"/>
</dbReference>
<dbReference type="Pfam" id="PF01546">
    <property type="entry name" value="Peptidase_M20"/>
    <property type="match status" value="1"/>
</dbReference>
<dbReference type="SUPFAM" id="SSF55031">
    <property type="entry name" value="Bacterial exopeptidase dimerisation domain"/>
    <property type="match status" value="1"/>
</dbReference>
<dbReference type="SUPFAM" id="SSF53187">
    <property type="entry name" value="Zn-dependent exopeptidases"/>
    <property type="match status" value="1"/>
</dbReference>
<dbReference type="PROSITE" id="PS00758">
    <property type="entry name" value="ARGE_DAPE_CPG2_1"/>
    <property type="match status" value="1"/>
</dbReference>